<evidence type="ECO:0000269" key="1">
    <source>
    </source>
</evidence>
<evidence type="ECO:0000303" key="2">
    <source>
    </source>
</evidence>
<evidence type="ECO:0000305" key="3"/>
<evidence type="ECO:0000305" key="4">
    <source>
    </source>
</evidence>
<evidence type="ECO:0007829" key="5">
    <source>
        <dbReference type="PDB" id="2NCX"/>
    </source>
</evidence>
<keyword id="KW-0002">3D-structure</keyword>
<keyword id="KW-0878">Amphibian defense peptide</keyword>
<keyword id="KW-0044">Antibiotic</keyword>
<keyword id="KW-0929">Antimicrobial</keyword>
<keyword id="KW-0204">Cytolysis</keyword>
<keyword id="KW-0903">Direct protein sequencing</keyword>
<keyword id="KW-0295">Fungicide</keyword>
<keyword id="KW-0354">Hemolysis</keyword>
<keyword id="KW-0391">Immunity</keyword>
<keyword id="KW-0399">Innate immunity</keyword>
<keyword id="KW-0964">Secreted</keyword>
<reference key="1">
    <citation type="journal article" date="2001" name="Biochem. Biophys. Res. Commun.">
        <title>Pseudin-2: an antimicrobial peptide with low hemolytic activity from the skin of the paradoxical frog.</title>
        <authorList>
            <person name="Olson L. III"/>
            <person name="Soto A.M."/>
            <person name="Knoop F.C."/>
            <person name="Conlon J.M."/>
        </authorList>
    </citation>
    <scope>PROTEIN SEQUENCE</scope>
    <scope>FUNCTION</scope>
    <scope>MASS SPECTROMETRY</scope>
    <scope>SUBCELLULAR LOCATION</scope>
    <source>
        <tissue>Skin secretion</tissue>
    </source>
</reference>
<feature type="peptide" id="PRO_0000043829" description="Pseudin-2" evidence="1">
    <location>
        <begin position="1"/>
        <end position="24"/>
    </location>
</feature>
<feature type="helix" evidence="5">
    <location>
        <begin position="3"/>
        <end position="22"/>
    </location>
</feature>
<accession>P83189</accession>
<organism>
    <name type="scientific">Pseudis paradoxa</name>
    <name type="common">Paradoxical frog</name>
    <dbReference type="NCBI Taxonomy" id="43558"/>
    <lineage>
        <taxon>Eukaryota</taxon>
        <taxon>Metazoa</taxon>
        <taxon>Chordata</taxon>
        <taxon>Craniata</taxon>
        <taxon>Vertebrata</taxon>
        <taxon>Euteleostomi</taxon>
        <taxon>Amphibia</taxon>
        <taxon>Batrachia</taxon>
        <taxon>Anura</taxon>
        <taxon>Neobatrachia</taxon>
        <taxon>Hyloidea</taxon>
        <taxon>Hylidae</taxon>
        <taxon>Hylinae</taxon>
        <taxon>Dendropsophini</taxon>
        <taxon>Pseudis</taxon>
    </lineage>
</organism>
<protein>
    <recommendedName>
        <fullName evidence="2">Pseudin-2</fullName>
    </recommendedName>
</protein>
<comment type="function">
    <text evidence="1">Antimicrobial peptide with activity against fungus (C.albicans) and Gram-positive and Gram-negative bacteria (S.aureus and E.coli) (PubMed:11689009). Also has low hemolytic activity against human erythrocytes (PubMed:11689009).</text>
</comment>
<comment type="subcellular location">
    <subcellularLocation>
        <location evidence="1">Secreted</location>
    </subcellularLocation>
</comment>
<comment type="tissue specificity">
    <text evidence="4">Expressed by the skin glands.</text>
</comment>
<comment type="mass spectrometry"/>
<comment type="similarity">
    <text evidence="3">Belongs to the frog skin active peptide (FSAP) family. Pseudin subfamily.</text>
</comment>
<comment type="online information" name="The antimicrobial peptide database">
    <link uri="https://wangapd3.com/database/query_output.php?ID=00476"/>
</comment>
<name>PS2_PSEPD</name>
<dbReference type="PDB" id="2NCX">
    <property type="method" value="NMR"/>
    <property type="chains" value="A=1-24"/>
</dbReference>
<dbReference type="PDB" id="2NCY">
    <property type="method" value="NMR"/>
    <property type="chains" value="A=1-24"/>
</dbReference>
<dbReference type="PDBsum" id="2NCX"/>
<dbReference type="PDBsum" id="2NCY"/>
<dbReference type="BMRB" id="P83189"/>
<dbReference type="SMR" id="P83189"/>
<dbReference type="GO" id="GO:0005576">
    <property type="term" value="C:extracellular region"/>
    <property type="evidence" value="ECO:0007669"/>
    <property type="project" value="UniProtKB-SubCell"/>
</dbReference>
<dbReference type="GO" id="GO:0042742">
    <property type="term" value="P:defense response to bacterium"/>
    <property type="evidence" value="ECO:0007669"/>
    <property type="project" value="UniProtKB-KW"/>
</dbReference>
<dbReference type="GO" id="GO:0050832">
    <property type="term" value="P:defense response to fungus"/>
    <property type="evidence" value="ECO:0000314"/>
    <property type="project" value="UniProtKB"/>
</dbReference>
<dbReference type="GO" id="GO:0045087">
    <property type="term" value="P:innate immune response"/>
    <property type="evidence" value="ECO:0007669"/>
    <property type="project" value="UniProtKB-KW"/>
</dbReference>
<dbReference type="GO" id="GO:0031640">
    <property type="term" value="P:killing of cells of another organism"/>
    <property type="evidence" value="ECO:0007669"/>
    <property type="project" value="UniProtKB-KW"/>
</dbReference>
<dbReference type="GO" id="GO:0006805">
    <property type="term" value="P:xenobiotic metabolic process"/>
    <property type="evidence" value="ECO:0000314"/>
    <property type="project" value="UniProtKB"/>
</dbReference>
<dbReference type="InterPro" id="IPR013156">
    <property type="entry name" value="Antimicrobial_19"/>
</dbReference>
<dbReference type="Pfam" id="PF08225">
    <property type="entry name" value="Antimicrobial19"/>
    <property type="match status" value="1"/>
</dbReference>
<proteinExistence type="evidence at protein level"/>
<sequence>GLNALKKVFQGIHEAIKLINNHVQ</sequence>